<name>RL22_WOLPP</name>
<proteinExistence type="inferred from homology"/>
<protein>
    <recommendedName>
        <fullName evidence="1">Large ribosomal subunit protein uL22</fullName>
    </recommendedName>
    <alternativeName>
        <fullName evidence="2">50S ribosomal protein L22</fullName>
    </alternativeName>
</protein>
<reference key="1">
    <citation type="journal article" date="2008" name="Mol. Biol. Evol.">
        <title>Genome evolution of Wolbachia strain wPip from the Culex pipiens group.</title>
        <authorList>
            <person name="Klasson L."/>
            <person name="Walker T."/>
            <person name="Sebaihia M."/>
            <person name="Sanders M.J."/>
            <person name="Quail M.A."/>
            <person name="Lord A."/>
            <person name="Sanders S."/>
            <person name="Earl J."/>
            <person name="O'Neill S.L."/>
            <person name="Thomson N."/>
            <person name="Sinkins S.P."/>
            <person name="Parkhill J."/>
        </authorList>
    </citation>
    <scope>NUCLEOTIDE SEQUENCE [LARGE SCALE GENOMIC DNA]</scope>
    <source>
        <strain>wPip</strain>
    </source>
</reference>
<evidence type="ECO:0000255" key="1">
    <source>
        <dbReference type="HAMAP-Rule" id="MF_01331"/>
    </source>
</evidence>
<evidence type="ECO:0000305" key="2"/>
<dbReference type="EMBL" id="AM999887">
    <property type="protein sequence ID" value="CAQ55279.1"/>
    <property type="molecule type" value="Genomic_DNA"/>
</dbReference>
<dbReference type="RefSeq" id="WP_007302537.1">
    <property type="nucleotide sequence ID" value="NC_010981.1"/>
</dbReference>
<dbReference type="SMR" id="B3CN31"/>
<dbReference type="KEGG" id="wpi:WP1171"/>
<dbReference type="eggNOG" id="COG0091">
    <property type="taxonomic scope" value="Bacteria"/>
</dbReference>
<dbReference type="HOGENOM" id="CLU_083987_3_0_5"/>
<dbReference type="Proteomes" id="UP000008814">
    <property type="component" value="Chromosome"/>
</dbReference>
<dbReference type="GO" id="GO:0022625">
    <property type="term" value="C:cytosolic large ribosomal subunit"/>
    <property type="evidence" value="ECO:0007669"/>
    <property type="project" value="TreeGrafter"/>
</dbReference>
<dbReference type="GO" id="GO:0019843">
    <property type="term" value="F:rRNA binding"/>
    <property type="evidence" value="ECO:0007669"/>
    <property type="project" value="UniProtKB-UniRule"/>
</dbReference>
<dbReference type="GO" id="GO:0003735">
    <property type="term" value="F:structural constituent of ribosome"/>
    <property type="evidence" value="ECO:0007669"/>
    <property type="project" value="InterPro"/>
</dbReference>
<dbReference type="GO" id="GO:0006412">
    <property type="term" value="P:translation"/>
    <property type="evidence" value="ECO:0007669"/>
    <property type="project" value="UniProtKB-UniRule"/>
</dbReference>
<dbReference type="CDD" id="cd00336">
    <property type="entry name" value="Ribosomal_L22"/>
    <property type="match status" value="1"/>
</dbReference>
<dbReference type="Gene3D" id="3.90.470.10">
    <property type="entry name" value="Ribosomal protein L22/L17"/>
    <property type="match status" value="1"/>
</dbReference>
<dbReference type="HAMAP" id="MF_01331_B">
    <property type="entry name" value="Ribosomal_uL22_B"/>
    <property type="match status" value="1"/>
</dbReference>
<dbReference type="InterPro" id="IPR001063">
    <property type="entry name" value="Ribosomal_uL22"/>
</dbReference>
<dbReference type="InterPro" id="IPR005727">
    <property type="entry name" value="Ribosomal_uL22_bac/chlpt-type"/>
</dbReference>
<dbReference type="InterPro" id="IPR047867">
    <property type="entry name" value="Ribosomal_uL22_bac/org-type"/>
</dbReference>
<dbReference type="InterPro" id="IPR036394">
    <property type="entry name" value="Ribosomal_uL22_sf"/>
</dbReference>
<dbReference type="NCBIfam" id="TIGR01044">
    <property type="entry name" value="rplV_bact"/>
    <property type="match status" value="1"/>
</dbReference>
<dbReference type="PANTHER" id="PTHR13501">
    <property type="entry name" value="CHLOROPLAST 50S RIBOSOMAL PROTEIN L22-RELATED"/>
    <property type="match status" value="1"/>
</dbReference>
<dbReference type="PANTHER" id="PTHR13501:SF8">
    <property type="entry name" value="LARGE RIBOSOMAL SUBUNIT PROTEIN UL22M"/>
    <property type="match status" value="1"/>
</dbReference>
<dbReference type="Pfam" id="PF00237">
    <property type="entry name" value="Ribosomal_L22"/>
    <property type="match status" value="1"/>
</dbReference>
<dbReference type="SUPFAM" id="SSF54843">
    <property type="entry name" value="Ribosomal protein L22"/>
    <property type="match status" value="1"/>
</dbReference>
<keyword id="KW-0687">Ribonucleoprotein</keyword>
<keyword id="KW-0689">Ribosomal protein</keyword>
<keyword id="KW-0694">RNA-binding</keyword>
<keyword id="KW-0699">rRNA-binding</keyword>
<feature type="chain" id="PRO_1000142326" description="Large ribosomal subunit protein uL22">
    <location>
        <begin position="1"/>
        <end position="116"/>
    </location>
</feature>
<gene>
    <name evidence="1" type="primary">rplV</name>
    <name type="ordered locus">WP1171</name>
</gene>
<sequence length="116" mass="13159">MKNRDIIVEAGSKVLRSTPRKLNLVADLVRNKKVSFANVQLRFCEKKAAGFIMKVLNSAIANAQNNYGLNVDNLYIKEILIGKSLTLRRVYPKAMGRANRMSKFYSNITIKLKEIV</sequence>
<accession>B3CN31</accession>
<comment type="function">
    <text evidence="1">This protein binds specifically to 23S rRNA; its binding is stimulated by other ribosomal proteins, e.g. L4, L17, and L20. It is important during the early stages of 50S assembly. It makes multiple contacts with different domains of the 23S rRNA in the assembled 50S subunit and ribosome (By similarity).</text>
</comment>
<comment type="function">
    <text evidence="1">The globular domain of the protein is located near the polypeptide exit tunnel on the outside of the subunit, while an extended beta-hairpin is found that lines the wall of the exit tunnel in the center of the 70S ribosome.</text>
</comment>
<comment type="subunit">
    <text evidence="1">Part of the 50S ribosomal subunit.</text>
</comment>
<comment type="similarity">
    <text evidence="1">Belongs to the universal ribosomal protein uL22 family.</text>
</comment>
<organism>
    <name type="scientific">Wolbachia pipientis subsp. Culex pipiens (strain wPip)</name>
    <dbReference type="NCBI Taxonomy" id="570417"/>
    <lineage>
        <taxon>Bacteria</taxon>
        <taxon>Pseudomonadati</taxon>
        <taxon>Pseudomonadota</taxon>
        <taxon>Alphaproteobacteria</taxon>
        <taxon>Rickettsiales</taxon>
        <taxon>Anaplasmataceae</taxon>
        <taxon>Wolbachieae</taxon>
        <taxon>Wolbachia</taxon>
    </lineage>
</organism>